<feature type="chain" id="PRO_0000260077" description="Recombining binding protein suppressor of hairless">
    <location>
        <begin position="1"/>
        <end position="486"/>
    </location>
</feature>
<feature type="domain" description="IPT/TIG">
    <location>
        <begin position="341"/>
        <end position="431"/>
    </location>
</feature>
<feature type="region of interest" description="DNA-binding" evidence="3">
    <location>
        <begin position="43"/>
        <end position="53"/>
    </location>
</feature>
<feature type="region of interest" description="DNA-binding" evidence="3">
    <location>
        <begin position="151"/>
        <end position="156"/>
    </location>
</feature>
<feature type="region of interest" description="DNA-binding" evidence="3">
    <location>
        <begin position="178"/>
        <end position="183"/>
    </location>
</feature>
<feature type="region of interest" description="Disordered" evidence="4">
    <location>
        <begin position="451"/>
        <end position="486"/>
    </location>
</feature>
<feature type="compositionally biased region" description="Polar residues" evidence="4">
    <location>
        <begin position="451"/>
        <end position="467"/>
    </location>
</feature>
<feature type="compositionally biased region" description="Low complexity" evidence="4">
    <location>
        <begin position="468"/>
        <end position="486"/>
    </location>
</feature>
<feature type="modified residue" description="N6-acetyllysine" evidence="2">
    <location>
        <position position="161"/>
    </location>
</feature>
<accession>Q5RFK6</accession>
<dbReference type="EMBL" id="CR857150">
    <property type="protein sequence ID" value="CAH89451.1"/>
    <property type="molecule type" value="mRNA"/>
</dbReference>
<dbReference type="RefSeq" id="XP_024101515.1">
    <property type="nucleotide sequence ID" value="XM_024245747.3"/>
</dbReference>
<dbReference type="RefSeq" id="XP_024101516.1">
    <property type="nucleotide sequence ID" value="XM_024245748.3"/>
</dbReference>
<dbReference type="RefSeq" id="XP_054409767.1">
    <property type="nucleotide sequence ID" value="XM_054553792.2"/>
</dbReference>
<dbReference type="RefSeq" id="XP_054409768.1">
    <property type="nucleotide sequence ID" value="XM_054553793.2"/>
</dbReference>
<dbReference type="SMR" id="Q5RFK6"/>
<dbReference type="FunCoup" id="Q5RFK6">
    <property type="interactions" value="3045"/>
</dbReference>
<dbReference type="STRING" id="9601.ENSPPYP00000016373"/>
<dbReference type="Ensembl" id="ENSPPYT00000037130.1">
    <property type="protein sequence ID" value="ENSPPYP00000043620.1"/>
    <property type="gene ID" value="ENSPPYG00000014652.3"/>
</dbReference>
<dbReference type="GeneID" id="100445052"/>
<dbReference type="eggNOG" id="KOG3743">
    <property type="taxonomic scope" value="Eukaryota"/>
</dbReference>
<dbReference type="GeneTree" id="ENSGT00390000005197"/>
<dbReference type="InParanoid" id="Q5RFK6"/>
<dbReference type="Proteomes" id="UP000001595">
    <property type="component" value="Chromosome 4"/>
</dbReference>
<dbReference type="GO" id="GO:0005737">
    <property type="term" value="C:cytoplasm"/>
    <property type="evidence" value="ECO:0000250"/>
    <property type="project" value="UniProtKB"/>
</dbReference>
<dbReference type="GO" id="GO:0005634">
    <property type="term" value="C:nucleus"/>
    <property type="evidence" value="ECO:0000250"/>
    <property type="project" value="UniProtKB"/>
</dbReference>
<dbReference type="GO" id="GO:0001228">
    <property type="term" value="F:DNA-binding transcription activator activity, RNA polymerase II-specific"/>
    <property type="evidence" value="ECO:0007669"/>
    <property type="project" value="InterPro"/>
</dbReference>
<dbReference type="GO" id="GO:0140297">
    <property type="term" value="F:DNA-binding transcription factor binding"/>
    <property type="evidence" value="ECO:0000250"/>
    <property type="project" value="UniProtKB"/>
</dbReference>
<dbReference type="GO" id="GO:0000978">
    <property type="term" value="F:RNA polymerase II cis-regulatory region sequence-specific DNA binding"/>
    <property type="evidence" value="ECO:0007669"/>
    <property type="project" value="InterPro"/>
</dbReference>
<dbReference type="GO" id="GO:0043565">
    <property type="term" value="F:sequence-specific DNA binding"/>
    <property type="evidence" value="ECO:0000250"/>
    <property type="project" value="UniProtKB"/>
</dbReference>
<dbReference type="GO" id="GO:0045944">
    <property type="term" value="P:positive regulation of transcription by RNA polymerase II"/>
    <property type="evidence" value="ECO:0000250"/>
    <property type="project" value="UniProtKB"/>
</dbReference>
<dbReference type="GO" id="GO:0007221">
    <property type="term" value="P:positive regulation of transcription of Notch receptor target"/>
    <property type="evidence" value="ECO:0000250"/>
    <property type="project" value="UniProtKB"/>
</dbReference>
<dbReference type="CDD" id="cd01176">
    <property type="entry name" value="IPT_RBP-Jkappa"/>
    <property type="match status" value="1"/>
</dbReference>
<dbReference type="FunFam" id="2.60.40.1450:FF:000001">
    <property type="entry name" value="Recombining binding protein suppressor of hairless"/>
    <property type="match status" value="1"/>
</dbReference>
<dbReference type="FunFam" id="2.80.10.50:FF:000003">
    <property type="entry name" value="recombining binding protein suppressor of hairless"/>
    <property type="match status" value="1"/>
</dbReference>
<dbReference type="FunFam" id="2.60.40.10:FF:000074">
    <property type="entry name" value="Recombining binding protein suppressor of hairless, putative"/>
    <property type="match status" value="1"/>
</dbReference>
<dbReference type="Gene3D" id="2.80.10.50">
    <property type="match status" value="1"/>
</dbReference>
<dbReference type="Gene3D" id="2.60.40.10">
    <property type="entry name" value="Immunoglobulins"/>
    <property type="match status" value="1"/>
</dbReference>
<dbReference type="Gene3D" id="2.60.40.1450">
    <property type="entry name" value="LAG1, DNA binding domain"/>
    <property type="match status" value="1"/>
</dbReference>
<dbReference type="InterPro" id="IPR015350">
    <property type="entry name" value="Beta-trefoil_DNA-bd_dom"/>
</dbReference>
<dbReference type="InterPro" id="IPR036358">
    <property type="entry name" value="BTD_sf"/>
</dbReference>
<dbReference type="InterPro" id="IPR040159">
    <property type="entry name" value="CLS_fam"/>
</dbReference>
<dbReference type="InterPro" id="IPR013783">
    <property type="entry name" value="Ig-like_fold"/>
</dbReference>
<dbReference type="InterPro" id="IPR014756">
    <property type="entry name" value="Ig_E-set"/>
</dbReference>
<dbReference type="InterPro" id="IPR008967">
    <property type="entry name" value="p53-like_TF_DNA-bd_sf"/>
</dbReference>
<dbReference type="InterPro" id="IPR015351">
    <property type="entry name" value="RBP-J/Cbf11/Cbf12_DNA-bd"/>
</dbReference>
<dbReference type="InterPro" id="IPR037095">
    <property type="entry name" value="RBP-J/Cbf11_DNA-bd_sf"/>
</dbReference>
<dbReference type="InterPro" id="IPR038007">
    <property type="entry name" value="RBP-Jkappa_IPT"/>
</dbReference>
<dbReference type="PANTHER" id="PTHR10665">
    <property type="entry name" value="RECOMBINING BINDING PROTEIN SUPPRESSOR OF HAIRLESS"/>
    <property type="match status" value="1"/>
</dbReference>
<dbReference type="Pfam" id="PF09270">
    <property type="entry name" value="BTD"/>
    <property type="match status" value="1"/>
</dbReference>
<dbReference type="Pfam" id="PF09271">
    <property type="entry name" value="LAG1-DNAbind"/>
    <property type="match status" value="1"/>
</dbReference>
<dbReference type="Pfam" id="PF20144">
    <property type="entry name" value="TIG_SUH"/>
    <property type="match status" value="1"/>
</dbReference>
<dbReference type="SMART" id="SM01268">
    <property type="entry name" value="BTD"/>
    <property type="match status" value="1"/>
</dbReference>
<dbReference type="SMART" id="SM01267">
    <property type="entry name" value="LAG1_DNAbind"/>
    <property type="match status" value="1"/>
</dbReference>
<dbReference type="SUPFAM" id="SSF110217">
    <property type="entry name" value="DNA-binding protein LAG-1 (CSL)"/>
    <property type="match status" value="1"/>
</dbReference>
<dbReference type="SUPFAM" id="SSF81296">
    <property type="entry name" value="E set domains"/>
    <property type="match status" value="1"/>
</dbReference>
<dbReference type="SUPFAM" id="SSF49417">
    <property type="entry name" value="p53-like transcription factors"/>
    <property type="match status" value="1"/>
</dbReference>
<organism>
    <name type="scientific">Pongo abelii</name>
    <name type="common">Sumatran orangutan</name>
    <name type="synonym">Pongo pygmaeus abelii</name>
    <dbReference type="NCBI Taxonomy" id="9601"/>
    <lineage>
        <taxon>Eukaryota</taxon>
        <taxon>Metazoa</taxon>
        <taxon>Chordata</taxon>
        <taxon>Craniata</taxon>
        <taxon>Vertebrata</taxon>
        <taxon>Euteleostomi</taxon>
        <taxon>Mammalia</taxon>
        <taxon>Eutheria</taxon>
        <taxon>Euarchontoglires</taxon>
        <taxon>Primates</taxon>
        <taxon>Haplorrhini</taxon>
        <taxon>Catarrhini</taxon>
        <taxon>Hominidae</taxon>
        <taxon>Pongo</taxon>
    </lineage>
</organism>
<sequence length="486" mass="54399">MAWIKRKFGERPPPKRLTKEAMRNYLKERGDQTVLILHAKVAQKSYGNEKRFFCPPPCVYLMGSGWKKKKEQMERDGCSEQESQPCAFIGIGNSDQEMQQLNLEGKNYCTAKTLYISDSDKRKHFMLSVKMFYGNSDDIGVFLSKRIKVISKPSKKKQSLKNADLCIASGTKVALFNRLRSQTVSTRYLHVEGGNFHASSQQWGAFFIHLLDDDESEGEEFTVRDGYIHYGQTVKLVCSVTGMALPRLIIRKVDKQTALLDADDPVSQLHKCAFYLKDTERMYLCLSQERIIQFQATPCPKEPNKEMINDGASWTIISTDKAEYTFYEGMGPVLAPVTPVPVVESLQLNGGGDVAMLELTGQNFTPNLRVWFGDVEAETMYRCGESMLCVVPDISAFREGWRWVRQPVQVPVTLVRNDGIIYSTSLTFTYTPEPGPRPHCSAAGAILRANSSQVPPNESNTNSEGSYTNASTNSTSVTSSTATVVS</sequence>
<name>SUH_PONAB</name>
<keyword id="KW-0007">Acetylation</keyword>
<keyword id="KW-0010">Activator</keyword>
<keyword id="KW-0963">Cytoplasm</keyword>
<keyword id="KW-0238">DNA-binding</keyword>
<keyword id="KW-0914">Notch signaling pathway</keyword>
<keyword id="KW-0539">Nucleus</keyword>
<keyword id="KW-1185">Reference proteome</keyword>
<keyword id="KW-0677">Repeat</keyword>
<keyword id="KW-0678">Repressor</keyword>
<keyword id="KW-0804">Transcription</keyword>
<keyword id="KW-0805">Transcription regulation</keyword>
<gene>
    <name type="primary">RBPJ</name>
    <name type="synonym">RBPSUH</name>
</gene>
<evidence type="ECO:0000250" key="1"/>
<evidence type="ECO:0000250" key="2">
    <source>
        <dbReference type="UniProtKB" id="P31266"/>
    </source>
</evidence>
<evidence type="ECO:0000250" key="3">
    <source>
        <dbReference type="UniProtKB" id="Q06330"/>
    </source>
</evidence>
<evidence type="ECO:0000256" key="4">
    <source>
        <dbReference type="SAM" id="MobiDB-lite"/>
    </source>
</evidence>
<evidence type="ECO:0000305" key="5"/>
<reference key="1">
    <citation type="submission" date="2004-11" db="EMBL/GenBank/DDBJ databases">
        <authorList>
            <consortium name="The German cDNA consortium"/>
        </authorList>
    </citation>
    <scope>NUCLEOTIDE SEQUENCE [LARGE SCALE MRNA]</scope>
    <source>
        <tissue>Heart</tissue>
    </source>
</reference>
<proteinExistence type="evidence at transcript level"/>
<protein>
    <recommendedName>
        <fullName>Recombining binding protein suppressor of hairless</fullName>
    </recommendedName>
    <alternativeName>
        <fullName>J kappa-recombination signal-binding protein</fullName>
    </alternativeName>
    <alternativeName>
        <fullName>RBP-J kappa</fullName>
    </alternativeName>
</protein>
<comment type="function">
    <text evidence="2 3">Transcriptional regulator that plays a central role in Notch signaling, a signaling pathway involved in cell-cell communication that regulates a broad spectrum of cell-fate determinations. Acts as a transcriptional repressor when it is not associated with Notch proteins. When associated with some NICD product of Notch proteins (Notch intracellular domain), it acts as a transcriptional activator that activates transcription of Notch target genes. Probably represses or activates transcription via the recruitment of chromatin remodeling complexes containing histone deacetylase or histone acetylase proteins, respectively. Specifically binds to the immunoglobulin kappa-type J segment recombination signal sequence. Binds specifically to methylated DNA. Binds to the oxygen responsive element of COX4I2 and activates its transcription under hypoxia conditions (4% oxygen). Negatively regulates the phagocyte oxidative burst in response to bacterial infection by repressing transcription of NADPH oxidase subunits (By similarity).</text>
</comment>
<comment type="subunit">
    <text evidence="2 3">Interacts with activated NOTCH1, NOTCH2 or NOTCH3. Interacts with MINT/SHARP. This interaction may mediate the recruitment of large corepressor complexes containing proteins such as HDAC1, HDAC2, NCOR2, SAP30, FHL1/KYOT2 and CIR1. Interacts with EP300, MAML1 and PTF1A. Interacts with RITA1, leading to nuclear export, prevent the interaction between RBPJ and NICD product and subsequent down-regulation of the Notch signaling pathway. Interacts with SNW1. Interacts with CHCHD2 and CXXC5. Interacts with BEND6 (via BEN domain). Interacts with NKAPL. Interacts with ZMIZ1. Interacts with RBM15. Interacts with L3MBTL3 and KDM1A; the interaction with KDM1A is weaker in the absence of L3MBTL3 and the interaction with L3MBTL3 is impaired by Notch-derived peptides containing the intracellular domain (NICD) (By similarity).</text>
</comment>
<comment type="subcellular location">
    <subcellularLocation>
        <location evidence="1">Nucleus</location>
    </subcellularLocation>
    <subcellularLocation>
        <location evidence="1">Cytoplasm</location>
    </subcellularLocation>
    <text evidence="1">Mainly nuclear, upon interaction with RITA1, translocates to the cytoplasm, down-regulating the Notch signaling pathway.</text>
</comment>
<comment type="similarity">
    <text evidence="5">Belongs to the Su(H) family.</text>
</comment>